<reference key="1">
    <citation type="journal article" date="2004" name="Genome Res.">
        <title>The status, quality, and expansion of the NIH full-length cDNA project: the Mammalian Gene Collection (MGC).</title>
        <authorList>
            <consortium name="The MGC Project Team"/>
        </authorList>
    </citation>
    <scope>NUCLEOTIDE SEQUENCE [LARGE SCALE MRNA] (ISOFORM 1)</scope>
    <source>
        <tissue>Embryo</tissue>
        <tissue>Olfactory epithelium</tissue>
    </source>
</reference>
<reference key="2">
    <citation type="journal article" date="2005" name="Science">
        <title>The transcriptional landscape of the mammalian genome.</title>
        <authorList>
            <person name="Carninci P."/>
            <person name="Kasukawa T."/>
            <person name="Katayama S."/>
            <person name="Gough J."/>
            <person name="Frith M.C."/>
            <person name="Maeda N."/>
            <person name="Oyama R."/>
            <person name="Ravasi T."/>
            <person name="Lenhard B."/>
            <person name="Wells C."/>
            <person name="Kodzius R."/>
            <person name="Shimokawa K."/>
            <person name="Bajic V.B."/>
            <person name="Brenner S.E."/>
            <person name="Batalov S."/>
            <person name="Forrest A.R."/>
            <person name="Zavolan M."/>
            <person name="Davis M.J."/>
            <person name="Wilming L.G."/>
            <person name="Aidinis V."/>
            <person name="Allen J.E."/>
            <person name="Ambesi-Impiombato A."/>
            <person name="Apweiler R."/>
            <person name="Aturaliya R.N."/>
            <person name="Bailey T.L."/>
            <person name="Bansal M."/>
            <person name="Baxter L."/>
            <person name="Beisel K.W."/>
            <person name="Bersano T."/>
            <person name="Bono H."/>
            <person name="Chalk A.M."/>
            <person name="Chiu K.P."/>
            <person name="Choudhary V."/>
            <person name="Christoffels A."/>
            <person name="Clutterbuck D.R."/>
            <person name="Crowe M.L."/>
            <person name="Dalla E."/>
            <person name="Dalrymple B.P."/>
            <person name="de Bono B."/>
            <person name="Della Gatta G."/>
            <person name="di Bernardo D."/>
            <person name="Down T."/>
            <person name="Engstrom P."/>
            <person name="Fagiolini M."/>
            <person name="Faulkner G."/>
            <person name="Fletcher C.F."/>
            <person name="Fukushima T."/>
            <person name="Furuno M."/>
            <person name="Futaki S."/>
            <person name="Gariboldi M."/>
            <person name="Georgii-Hemming P."/>
            <person name="Gingeras T.R."/>
            <person name="Gojobori T."/>
            <person name="Green R.E."/>
            <person name="Gustincich S."/>
            <person name="Harbers M."/>
            <person name="Hayashi Y."/>
            <person name="Hensch T.K."/>
            <person name="Hirokawa N."/>
            <person name="Hill D."/>
            <person name="Huminiecki L."/>
            <person name="Iacono M."/>
            <person name="Ikeo K."/>
            <person name="Iwama A."/>
            <person name="Ishikawa T."/>
            <person name="Jakt M."/>
            <person name="Kanapin A."/>
            <person name="Katoh M."/>
            <person name="Kawasawa Y."/>
            <person name="Kelso J."/>
            <person name="Kitamura H."/>
            <person name="Kitano H."/>
            <person name="Kollias G."/>
            <person name="Krishnan S.P."/>
            <person name="Kruger A."/>
            <person name="Kummerfeld S.K."/>
            <person name="Kurochkin I.V."/>
            <person name="Lareau L.F."/>
            <person name="Lazarevic D."/>
            <person name="Lipovich L."/>
            <person name="Liu J."/>
            <person name="Liuni S."/>
            <person name="McWilliam S."/>
            <person name="Madan Babu M."/>
            <person name="Madera M."/>
            <person name="Marchionni L."/>
            <person name="Matsuda H."/>
            <person name="Matsuzawa S."/>
            <person name="Miki H."/>
            <person name="Mignone F."/>
            <person name="Miyake S."/>
            <person name="Morris K."/>
            <person name="Mottagui-Tabar S."/>
            <person name="Mulder N."/>
            <person name="Nakano N."/>
            <person name="Nakauchi H."/>
            <person name="Ng P."/>
            <person name="Nilsson R."/>
            <person name="Nishiguchi S."/>
            <person name="Nishikawa S."/>
            <person name="Nori F."/>
            <person name="Ohara O."/>
            <person name="Okazaki Y."/>
            <person name="Orlando V."/>
            <person name="Pang K.C."/>
            <person name="Pavan W.J."/>
            <person name="Pavesi G."/>
            <person name="Pesole G."/>
            <person name="Petrovsky N."/>
            <person name="Piazza S."/>
            <person name="Reed J."/>
            <person name="Reid J.F."/>
            <person name="Ring B.Z."/>
            <person name="Ringwald M."/>
            <person name="Rost B."/>
            <person name="Ruan Y."/>
            <person name="Salzberg S.L."/>
            <person name="Sandelin A."/>
            <person name="Schneider C."/>
            <person name="Schoenbach C."/>
            <person name="Sekiguchi K."/>
            <person name="Semple C.A."/>
            <person name="Seno S."/>
            <person name="Sessa L."/>
            <person name="Sheng Y."/>
            <person name="Shibata Y."/>
            <person name="Shimada H."/>
            <person name="Shimada K."/>
            <person name="Silva D."/>
            <person name="Sinclair B."/>
            <person name="Sperling S."/>
            <person name="Stupka E."/>
            <person name="Sugiura K."/>
            <person name="Sultana R."/>
            <person name="Takenaka Y."/>
            <person name="Taki K."/>
            <person name="Tammoja K."/>
            <person name="Tan S.L."/>
            <person name="Tang S."/>
            <person name="Taylor M.S."/>
            <person name="Tegner J."/>
            <person name="Teichmann S.A."/>
            <person name="Ueda H.R."/>
            <person name="van Nimwegen E."/>
            <person name="Verardo R."/>
            <person name="Wei C.L."/>
            <person name="Yagi K."/>
            <person name="Yamanishi H."/>
            <person name="Zabarovsky E."/>
            <person name="Zhu S."/>
            <person name="Zimmer A."/>
            <person name="Hide W."/>
            <person name="Bult C."/>
            <person name="Grimmond S.M."/>
            <person name="Teasdale R.D."/>
            <person name="Liu E.T."/>
            <person name="Brusic V."/>
            <person name="Quackenbush J."/>
            <person name="Wahlestedt C."/>
            <person name="Mattick J.S."/>
            <person name="Hume D.A."/>
            <person name="Kai C."/>
            <person name="Sasaki D."/>
            <person name="Tomaru Y."/>
            <person name="Fukuda S."/>
            <person name="Kanamori-Katayama M."/>
            <person name="Suzuki M."/>
            <person name="Aoki J."/>
            <person name="Arakawa T."/>
            <person name="Iida J."/>
            <person name="Imamura K."/>
            <person name="Itoh M."/>
            <person name="Kato T."/>
            <person name="Kawaji H."/>
            <person name="Kawagashira N."/>
            <person name="Kawashima T."/>
            <person name="Kojima M."/>
            <person name="Kondo S."/>
            <person name="Konno H."/>
            <person name="Nakano K."/>
            <person name="Ninomiya N."/>
            <person name="Nishio T."/>
            <person name="Okada M."/>
            <person name="Plessy C."/>
            <person name="Shibata K."/>
            <person name="Shiraki T."/>
            <person name="Suzuki S."/>
            <person name="Tagami M."/>
            <person name="Waki K."/>
            <person name="Watahiki A."/>
            <person name="Okamura-Oho Y."/>
            <person name="Suzuki H."/>
            <person name="Kawai J."/>
            <person name="Hayashizaki Y."/>
        </authorList>
    </citation>
    <scope>NUCLEOTIDE SEQUENCE [LARGE SCALE MRNA] (ISOFORM 3)</scope>
    <scope>NUCLEOTIDE SEQUENCE [LARGE SCALE MRNA] OF 684-923 (ISOFORM 2)</scope>
    <source>
        <strain>C57BL/6J</strain>
    </source>
</reference>
<reference key="3">
    <citation type="journal article" date="2004" name="Mol. Cell. Proteomics">
        <title>Phosphoproteomic analysis of the developing mouse brain.</title>
        <authorList>
            <person name="Ballif B.A."/>
            <person name="Villen J."/>
            <person name="Beausoleil S.A."/>
            <person name="Schwartz D."/>
            <person name="Gygi S.P."/>
        </authorList>
    </citation>
    <scope>PHOSPHORYLATION [LARGE SCALE ANALYSIS] AT THR-242 (ISOFORM 3)</scope>
    <scope>IDENTIFICATION BY MASS SPECTROMETRY [LARGE SCALE ANALYSIS]</scope>
    <source>
        <tissue>Embryonic brain</tissue>
    </source>
</reference>
<reference key="4">
    <citation type="journal article" date="2010" name="Cell">
        <title>A tissue-specific atlas of mouse protein phosphorylation and expression.</title>
        <authorList>
            <person name="Huttlin E.L."/>
            <person name="Jedrychowski M.P."/>
            <person name="Elias J.E."/>
            <person name="Goswami T."/>
            <person name="Rad R."/>
            <person name="Beausoleil S.A."/>
            <person name="Villen J."/>
            <person name="Haas W."/>
            <person name="Sowa M.E."/>
            <person name="Gygi S.P."/>
        </authorList>
    </citation>
    <scope>IDENTIFICATION BY MASS SPECTROMETRY [LARGE SCALE ANALYSIS]</scope>
    <source>
        <tissue>Brain</tissue>
        <tissue>Brown adipose tissue</tissue>
        <tissue>Heart</tissue>
        <tissue>Kidney</tissue>
        <tissue>Liver</tissue>
        <tissue>Lung</tissue>
        <tissue>Spleen</tissue>
        <tissue>Testis</tissue>
    </source>
</reference>
<feature type="chain" id="PRO_0000120782" description="Transportin-3">
    <location>
        <begin position="1"/>
        <end position="923"/>
    </location>
</feature>
<feature type="modified residue" description="N-acetylmethionine" evidence="1">
    <location>
        <position position="1"/>
    </location>
</feature>
<feature type="modified residue" description="Phosphoserine" evidence="1">
    <location>
        <position position="74"/>
    </location>
</feature>
<feature type="modified residue" description="Phosphothreonine" evidence="1">
    <location>
        <position position="896"/>
    </location>
</feature>
<feature type="splice variant" id="VSP_019595" description="In isoform 3." evidence="2">
    <original>QQDKTSSNLHEAASDCVCSALYAIENVETNLPLAM</original>
    <variation>VSKAAPAIATFNNQPSGTPQCFVGEKHFVCVLRLT</variation>
    <location>
        <begin position="233"/>
        <end position="267"/>
    </location>
</feature>
<feature type="splice variant" id="VSP_019596" description="In isoform 3." evidence="2">
    <location>
        <begin position="268"/>
        <end position="923"/>
    </location>
</feature>
<feature type="splice variant" id="VSP_011179" description="In isoform 2." evidence="2">
    <original>D</original>
    <variation>DLSVFLQ</variation>
    <location>
        <position position="810"/>
    </location>
</feature>
<feature type="modified residue" description="Phosphothreonine" evidence="5">
    <location sequence="Q6P2B1-3">
        <position position="242"/>
    </location>
</feature>
<keyword id="KW-0007">Acetylation</keyword>
<keyword id="KW-0025">Alternative splicing</keyword>
<keyword id="KW-0963">Cytoplasm</keyword>
<keyword id="KW-0539">Nucleus</keyword>
<keyword id="KW-0597">Phosphoprotein</keyword>
<keyword id="KW-0653">Protein transport</keyword>
<keyword id="KW-1185">Reference proteome</keyword>
<keyword id="KW-0813">Transport</keyword>
<proteinExistence type="evidence at protein level"/>
<accession>Q6P2B1</accession>
<accession>Q7TSL6</accession>
<accession>Q8BKX4</accession>
<accession>Q8BP42</accession>
<name>TNPO3_MOUSE</name>
<sequence length="923" mass="104170">MEGAKPTLQLVYQAVQALYHDPDPSGKERASFWLGELQRSVHAWEISDQLLQIRQDVESCYFAAQTMKMKIQTSFYELPTDSHASLRDSLLTHIQNLKDLSPVIVTQLALAIADLALQMPSWKGCVQTLVEKYSNDVTSLPFLLEILTVLPEEVHSRSLRIGANRRTEIIEDLAFYSSTVVSLLMTCVEKAGTDEKMLMKVFRCLGSWFNLGVLDSNFMANNKLLALLFEVLQQDKTSSNLHEAASDCVCSALYAIENVETNLPLAMQLFQGVLTLETAYHMAVAREDLDKVLNYCRIFTELCETFLEKIVCTPGQGLGDLRTLELLLICAGHPQYEVVEISFNFWYRLGEHLYKTNDEVIHSIFKAYIQRLLHALARHCQLEPDHEGVPEETDDFGEFRMRVSDLVKDLIFLIGSMECFAQLYSTLKEGNPPWEVTEAVLFIMAAIAKSVDPENNPTLVEVLEGVVHLPETVHTAVRYTSIELVGEMSEVVDRNPQFLDPVLGYLMKGLCEKPLASAAAKAIHNICSVCRDHMAQHFNGLLEIAHSLDSFMLSPEAAVGLLKGTALVLARLPLDKITECLSELCSVQVMALKKLLSQEPSNGISSDPTVFLDRLAVIFRHTNPIVENGQTHPCQKVIQEIWPVLSETLNKHRADNRIVERCCRCLRFAVRCVGKGSAALLQPLVTQMVNVYHVHQHSCFLYLGSILVDEYGMEEGCRQGLLDMLQALCIPTFQLLEQQNGLQNHPDTVDDLFRLATRFIQRSPVTLLRSQVVIPILQWAIASTTLDHRDANSSVMRFLRDLIHTGVANDHEEDFELRKELIGQVMSQLGQQLVSQLLHTCCFCLPPYTLPDVAEVLWEIMQVDRPTFCRWLENSLKGLPKETTVGAVTVTHKQLTDFHKQVTSAEECKQVCWALRDFTRLFR</sequence>
<evidence type="ECO:0000250" key="1">
    <source>
        <dbReference type="UniProtKB" id="Q9Y5L0"/>
    </source>
</evidence>
<evidence type="ECO:0000303" key="2">
    <source>
    </source>
</evidence>
<evidence type="ECO:0000305" key="3"/>
<evidence type="ECO:0000312" key="4">
    <source>
        <dbReference type="MGI" id="MGI:1196412"/>
    </source>
</evidence>
<evidence type="ECO:0007744" key="5">
    <source>
    </source>
</evidence>
<comment type="function">
    <text evidence="1">Importin, which transports target proteins into the nucleus. Specifically mediates the nuclear import of splicing factor serine/arginine (SR) proteins, such as RBM4, SFRS1 and SFRS2, by recognizing phosphorylated SR domains. Also mediates the nuclear import of serine/arginine (SR) protein CPSF6, independently of CPSF6 phosphorylation. The nuclear import process is regulated by the small GTPase Ran that partitions between cytoplasm and nucleus in the predominantly GDP- and GTP-bound form, respectively. Importin associates with target cargo proteins in the cytoplasm, and the competitive binding of GTP-bound Ran induces the release of cargos in the nucleus.</text>
</comment>
<comment type="subunit">
    <text evidence="1">Interacts with (GTP-bound) Ran. Interacts with (phosphorylated) SFRS1 and SFRS2; leading to their nuclear import. Interacts with NUP62. Interacts with RBM4. Interacts with CPSF6, promoting its nuclear import.</text>
</comment>
<comment type="subcellular location">
    <subcellularLocation>
        <location evidence="1">Nucleus envelope</location>
    </subcellularLocation>
    <subcellularLocation>
        <location evidence="1">Cytoplasm</location>
    </subcellularLocation>
    <text evidence="1">Localizes to the nuclear envelope and annulate lamellae, which consists in stacks of endoplasmic reticulum membranes containing a high density of nuclear pores.</text>
</comment>
<comment type="alternative products">
    <event type="alternative splicing"/>
    <isoform>
        <id>Q6P2B1-1</id>
        <name>1</name>
        <sequence type="displayed"/>
    </isoform>
    <isoform>
        <id>Q6P2B1-2</id>
        <name>2</name>
        <sequence type="described" ref="VSP_011179"/>
    </isoform>
    <isoform>
        <id>Q6P2B1-3</id>
        <name>3</name>
        <sequence type="described" ref="VSP_019595 VSP_019596"/>
    </isoform>
</comment>
<dbReference type="EMBL" id="AK049446">
    <property type="protein sequence ID" value="BAC33754.1"/>
    <property type="molecule type" value="mRNA"/>
</dbReference>
<dbReference type="EMBL" id="AK077714">
    <property type="protein sequence ID" value="BAC36974.1"/>
    <property type="molecule type" value="mRNA"/>
</dbReference>
<dbReference type="EMBL" id="BC052756">
    <property type="protein sequence ID" value="AAH52756.1"/>
    <property type="molecule type" value="mRNA"/>
</dbReference>
<dbReference type="EMBL" id="BC064646">
    <property type="protein sequence ID" value="AAH64646.1"/>
    <property type="molecule type" value="mRNA"/>
</dbReference>
<dbReference type="CCDS" id="CCDS19963.1">
    <molecule id="Q6P2B1-1"/>
</dbReference>
<dbReference type="CCDS" id="CCDS85023.1">
    <molecule id="Q6P2B1-2"/>
</dbReference>
<dbReference type="RefSeq" id="NP_001334008.1">
    <molecule id="Q6P2B1-2"/>
    <property type="nucleotide sequence ID" value="NM_001347079.2"/>
</dbReference>
<dbReference type="RefSeq" id="NP_796270.2">
    <molecule id="Q6P2B1-1"/>
    <property type="nucleotide sequence ID" value="NM_177296.4"/>
</dbReference>
<dbReference type="SMR" id="Q6P2B1"/>
<dbReference type="BioGRID" id="236407">
    <property type="interactions" value="6"/>
</dbReference>
<dbReference type="FunCoup" id="Q6P2B1">
    <property type="interactions" value="5347"/>
</dbReference>
<dbReference type="IntAct" id="Q6P2B1">
    <property type="interactions" value="1"/>
</dbReference>
<dbReference type="MINT" id="Q6P2B1"/>
<dbReference type="STRING" id="10090.ENSMUSP00000110906"/>
<dbReference type="GlyGen" id="Q6P2B1">
    <property type="glycosylation" value="1 site, 1 O-linked glycan (1 site)"/>
</dbReference>
<dbReference type="iPTMnet" id="Q6P2B1"/>
<dbReference type="PhosphoSitePlus" id="Q6P2B1"/>
<dbReference type="SwissPalm" id="Q6P2B1"/>
<dbReference type="jPOST" id="Q6P2B1"/>
<dbReference type="PaxDb" id="10090-ENSMUSP00000012679"/>
<dbReference type="PeptideAtlas" id="Q6P2B1"/>
<dbReference type="ProteomicsDB" id="259284">
    <molecule id="Q6P2B1-1"/>
</dbReference>
<dbReference type="ProteomicsDB" id="259285">
    <molecule id="Q6P2B1-2"/>
</dbReference>
<dbReference type="ProteomicsDB" id="259286">
    <molecule id="Q6P2B1-3"/>
</dbReference>
<dbReference type="Pumba" id="Q6P2B1"/>
<dbReference type="Antibodypedia" id="17836">
    <property type="antibodies" value="147 antibodies from 31 providers"/>
</dbReference>
<dbReference type="DNASU" id="320938"/>
<dbReference type="Ensembl" id="ENSMUST00000012679.15">
    <molecule id="Q6P2B1-1"/>
    <property type="protein sequence ID" value="ENSMUSP00000012679.9"/>
    <property type="gene ID" value="ENSMUSG00000012535.15"/>
</dbReference>
<dbReference type="Ensembl" id="ENSMUST00000115251.8">
    <molecule id="Q6P2B1-2"/>
    <property type="protein sequence ID" value="ENSMUSP00000110906.2"/>
    <property type="gene ID" value="ENSMUSG00000012535.15"/>
</dbReference>
<dbReference type="GeneID" id="320938"/>
<dbReference type="KEGG" id="mmu:320938"/>
<dbReference type="UCSC" id="uc009bdy.1">
    <molecule id="Q6P2B1-1"/>
    <property type="organism name" value="mouse"/>
</dbReference>
<dbReference type="UCSC" id="uc009bea.1">
    <molecule id="Q6P2B1-3"/>
    <property type="organism name" value="mouse"/>
</dbReference>
<dbReference type="AGR" id="MGI:1196412"/>
<dbReference type="CTD" id="23534"/>
<dbReference type="MGI" id="MGI:1196412">
    <property type="gene designation" value="Tnpo3"/>
</dbReference>
<dbReference type="VEuPathDB" id="HostDB:ENSMUSG00000012535"/>
<dbReference type="eggNOG" id="KOG2081">
    <property type="taxonomic scope" value="Eukaryota"/>
</dbReference>
<dbReference type="GeneTree" id="ENSGT00530000063347"/>
<dbReference type="HOGENOM" id="CLU_005996_0_2_1"/>
<dbReference type="InParanoid" id="Q6P2B1"/>
<dbReference type="OMA" id="LECITSW"/>
<dbReference type="OrthoDB" id="435593at2759"/>
<dbReference type="PhylomeDB" id="Q6P2B1"/>
<dbReference type="TreeFam" id="TF314539"/>
<dbReference type="BioGRID-ORCS" id="320938">
    <property type="hits" value="27 hits in 77 CRISPR screens"/>
</dbReference>
<dbReference type="ChiTaRS" id="Tnpo3">
    <property type="organism name" value="mouse"/>
</dbReference>
<dbReference type="PRO" id="PR:Q6P2B1"/>
<dbReference type="Proteomes" id="UP000000589">
    <property type="component" value="Chromosome 6"/>
</dbReference>
<dbReference type="RNAct" id="Q6P2B1">
    <property type="molecule type" value="protein"/>
</dbReference>
<dbReference type="Bgee" id="ENSMUSG00000012535">
    <property type="expression patterns" value="Expressed in floor plate of midbrain and 264 other cell types or tissues"/>
</dbReference>
<dbReference type="ExpressionAtlas" id="Q6P2B1">
    <property type="expression patterns" value="baseline and differential"/>
</dbReference>
<dbReference type="GO" id="GO:0005642">
    <property type="term" value="C:annulate lamellae"/>
    <property type="evidence" value="ECO:0000250"/>
    <property type="project" value="UniProtKB"/>
</dbReference>
<dbReference type="GO" id="GO:0005829">
    <property type="term" value="C:cytosol"/>
    <property type="evidence" value="ECO:0007669"/>
    <property type="project" value="Ensembl"/>
</dbReference>
<dbReference type="GO" id="GO:0005635">
    <property type="term" value="C:nuclear envelope"/>
    <property type="evidence" value="ECO:0000250"/>
    <property type="project" value="UniProtKB"/>
</dbReference>
<dbReference type="GO" id="GO:0005654">
    <property type="term" value="C:nucleoplasm"/>
    <property type="evidence" value="ECO:0007669"/>
    <property type="project" value="Ensembl"/>
</dbReference>
<dbReference type="GO" id="GO:0042802">
    <property type="term" value="F:identical protein binding"/>
    <property type="evidence" value="ECO:0007669"/>
    <property type="project" value="Ensembl"/>
</dbReference>
<dbReference type="GO" id="GO:0031267">
    <property type="term" value="F:small GTPase binding"/>
    <property type="evidence" value="ECO:0000250"/>
    <property type="project" value="UniProtKB"/>
</dbReference>
<dbReference type="GO" id="GO:0006606">
    <property type="term" value="P:protein import into nucleus"/>
    <property type="evidence" value="ECO:0000250"/>
    <property type="project" value="UniProtKB"/>
</dbReference>
<dbReference type="FunFam" id="1.25.10.10:FF:000079">
    <property type="entry name" value="transportin-3 isoform X1"/>
    <property type="match status" value="1"/>
</dbReference>
<dbReference type="Gene3D" id="1.25.10.10">
    <property type="entry name" value="Leucine-rich Repeat Variant"/>
    <property type="match status" value="1"/>
</dbReference>
<dbReference type="InterPro" id="IPR011989">
    <property type="entry name" value="ARM-like"/>
</dbReference>
<dbReference type="InterPro" id="IPR016024">
    <property type="entry name" value="ARM-type_fold"/>
</dbReference>
<dbReference type="InterPro" id="IPR013598">
    <property type="entry name" value="Exportin-1/Importin-b-like"/>
</dbReference>
<dbReference type="InterPro" id="IPR051345">
    <property type="entry name" value="Importin_beta-like_NTR"/>
</dbReference>
<dbReference type="PANTHER" id="PTHR12363">
    <property type="entry name" value="TRANSPORTIN 3 AND IMPORTIN 13"/>
    <property type="match status" value="1"/>
</dbReference>
<dbReference type="PANTHER" id="PTHR12363:SF42">
    <property type="entry name" value="TRANSPORTIN-3"/>
    <property type="match status" value="1"/>
</dbReference>
<dbReference type="Pfam" id="PF24138">
    <property type="entry name" value="TPR_TNPO3_IPO13_2nd"/>
    <property type="match status" value="1"/>
</dbReference>
<dbReference type="Pfam" id="PF24140">
    <property type="entry name" value="TPR_TNPO3_IPO13_3rd"/>
    <property type="match status" value="1"/>
</dbReference>
<dbReference type="Pfam" id="PF24139">
    <property type="entry name" value="TPR_TNPO3_IPO13_4th"/>
    <property type="match status" value="1"/>
</dbReference>
<dbReference type="Pfam" id="PF08389">
    <property type="entry name" value="Xpo1"/>
    <property type="match status" value="1"/>
</dbReference>
<dbReference type="SUPFAM" id="SSF48371">
    <property type="entry name" value="ARM repeat"/>
    <property type="match status" value="1"/>
</dbReference>
<gene>
    <name evidence="4" type="primary">Tnpo3</name>
</gene>
<organism>
    <name type="scientific">Mus musculus</name>
    <name type="common">Mouse</name>
    <dbReference type="NCBI Taxonomy" id="10090"/>
    <lineage>
        <taxon>Eukaryota</taxon>
        <taxon>Metazoa</taxon>
        <taxon>Chordata</taxon>
        <taxon>Craniata</taxon>
        <taxon>Vertebrata</taxon>
        <taxon>Euteleostomi</taxon>
        <taxon>Mammalia</taxon>
        <taxon>Eutheria</taxon>
        <taxon>Euarchontoglires</taxon>
        <taxon>Glires</taxon>
        <taxon>Rodentia</taxon>
        <taxon>Myomorpha</taxon>
        <taxon>Muroidea</taxon>
        <taxon>Muridae</taxon>
        <taxon>Murinae</taxon>
        <taxon>Mus</taxon>
        <taxon>Mus</taxon>
    </lineage>
</organism>
<protein>
    <recommendedName>
        <fullName evidence="3">Transportin-3</fullName>
    </recommendedName>
</protein>